<proteinExistence type="inferred from homology"/>
<feature type="chain" id="PRO_1000046330" description="Urease subunit gamma">
    <location>
        <begin position="1"/>
        <end position="108"/>
    </location>
</feature>
<dbReference type="EC" id="3.5.1.5" evidence="1"/>
<dbReference type="EMBL" id="AM180088">
    <property type="protein sequence ID" value="CAJ53715.1"/>
    <property type="molecule type" value="Genomic_DNA"/>
</dbReference>
<dbReference type="RefSeq" id="WP_011572797.1">
    <property type="nucleotide sequence ID" value="NC_008212.1"/>
</dbReference>
<dbReference type="SMR" id="Q18EB8"/>
<dbReference type="STRING" id="362976.HQ_3627A"/>
<dbReference type="GeneID" id="4194900"/>
<dbReference type="KEGG" id="hwa:HQ_3627A"/>
<dbReference type="eggNOG" id="arCOG04528">
    <property type="taxonomic scope" value="Archaea"/>
</dbReference>
<dbReference type="HOGENOM" id="CLU_145825_1_0_2"/>
<dbReference type="UniPathway" id="UPA00258">
    <property type="reaction ID" value="UER00370"/>
</dbReference>
<dbReference type="Proteomes" id="UP000001975">
    <property type="component" value="Chromosome"/>
</dbReference>
<dbReference type="GO" id="GO:0005737">
    <property type="term" value="C:cytoplasm"/>
    <property type="evidence" value="ECO:0007669"/>
    <property type="project" value="UniProtKB-SubCell"/>
</dbReference>
<dbReference type="GO" id="GO:0016151">
    <property type="term" value="F:nickel cation binding"/>
    <property type="evidence" value="ECO:0007669"/>
    <property type="project" value="InterPro"/>
</dbReference>
<dbReference type="GO" id="GO:0009039">
    <property type="term" value="F:urease activity"/>
    <property type="evidence" value="ECO:0007669"/>
    <property type="project" value="UniProtKB-UniRule"/>
</dbReference>
<dbReference type="GO" id="GO:0043419">
    <property type="term" value="P:urea catabolic process"/>
    <property type="evidence" value="ECO:0007669"/>
    <property type="project" value="UniProtKB-UniRule"/>
</dbReference>
<dbReference type="CDD" id="cd00390">
    <property type="entry name" value="Urease_gamma"/>
    <property type="match status" value="1"/>
</dbReference>
<dbReference type="Gene3D" id="3.30.280.10">
    <property type="entry name" value="Urease, gamma-like subunit"/>
    <property type="match status" value="1"/>
</dbReference>
<dbReference type="HAMAP" id="MF_00739">
    <property type="entry name" value="Urease_gamma"/>
    <property type="match status" value="1"/>
</dbReference>
<dbReference type="InterPro" id="IPR012010">
    <property type="entry name" value="Urease_gamma"/>
</dbReference>
<dbReference type="InterPro" id="IPR002026">
    <property type="entry name" value="Urease_gamma/gamma-beta_su"/>
</dbReference>
<dbReference type="InterPro" id="IPR036463">
    <property type="entry name" value="Urease_gamma_sf"/>
</dbReference>
<dbReference type="InterPro" id="IPR050069">
    <property type="entry name" value="Urease_subunit"/>
</dbReference>
<dbReference type="NCBIfam" id="NF009712">
    <property type="entry name" value="PRK13241.1"/>
    <property type="match status" value="1"/>
</dbReference>
<dbReference type="NCBIfam" id="TIGR00193">
    <property type="entry name" value="urease_gam"/>
    <property type="match status" value="1"/>
</dbReference>
<dbReference type="PANTHER" id="PTHR33569">
    <property type="entry name" value="UREASE"/>
    <property type="match status" value="1"/>
</dbReference>
<dbReference type="PANTHER" id="PTHR33569:SF1">
    <property type="entry name" value="UREASE"/>
    <property type="match status" value="1"/>
</dbReference>
<dbReference type="Pfam" id="PF00547">
    <property type="entry name" value="Urease_gamma"/>
    <property type="match status" value="1"/>
</dbReference>
<dbReference type="PIRSF" id="PIRSF001223">
    <property type="entry name" value="Urease_gamma"/>
    <property type="match status" value="1"/>
</dbReference>
<dbReference type="SUPFAM" id="SSF54111">
    <property type="entry name" value="Urease, gamma-subunit"/>
    <property type="match status" value="1"/>
</dbReference>
<evidence type="ECO:0000255" key="1">
    <source>
        <dbReference type="HAMAP-Rule" id="MF_00739"/>
    </source>
</evidence>
<protein>
    <recommendedName>
        <fullName evidence="1">Urease subunit gamma</fullName>
        <ecNumber evidence="1">3.5.1.5</ecNumber>
    </recommendedName>
    <alternativeName>
        <fullName evidence="1">Urea amidohydrolase subunit gamma</fullName>
    </alternativeName>
</protein>
<name>URE3_HALWD</name>
<reference key="1">
    <citation type="journal article" date="2006" name="BMC Genomics">
        <title>The genome of the square archaeon Haloquadratum walsbyi: life at the limits of water activity.</title>
        <authorList>
            <person name="Bolhuis H."/>
            <person name="Palm P."/>
            <person name="Wende A."/>
            <person name="Falb M."/>
            <person name="Rampp M."/>
            <person name="Rodriguez-Valera F."/>
            <person name="Pfeiffer F."/>
            <person name="Oesterhelt D."/>
        </authorList>
    </citation>
    <scope>NUCLEOTIDE SEQUENCE [LARGE SCALE GENOMIC DNA]</scope>
    <source>
        <strain>DSM 16790 / HBSQ001</strain>
    </source>
</reference>
<gene>
    <name evidence="1" type="primary">ureA</name>
    <name type="ordered locus">HQ_3627A</name>
</gene>
<comment type="catalytic activity">
    <reaction evidence="1">
        <text>urea + 2 H2O + H(+) = hydrogencarbonate + 2 NH4(+)</text>
        <dbReference type="Rhea" id="RHEA:20557"/>
        <dbReference type="ChEBI" id="CHEBI:15377"/>
        <dbReference type="ChEBI" id="CHEBI:15378"/>
        <dbReference type="ChEBI" id="CHEBI:16199"/>
        <dbReference type="ChEBI" id="CHEBI:17544"/>
        <dbReference type="ChEBI" id="CHEBI:28938"/>
        <dbReference type="EC" id="3.5.1.5"/>
    </reaction>
</comment>
<comment type="pathway">
    <text evidence="1">Nitrogen metabolism; urea degradation; CO(2) and NH(3) from urea (urease route): step 1/1.</text>
</comment>
<comment type="subunit">
    <text evidence="1">Heterotrimer of UreA (gamma), UreB (beta) and UreC (alpha) subunits. Three heterotrimers associate to form the active enzyme.</text>
</comment>
<comment type="subcellular location">
    <subcellularLocation>
        <location evidence="1">Cytoplasm</location>
    </subcellularLocation>
</comment>
<comment type="similarity">
    <text evidence="1">Belongs to the urease gamma subunit family.</text>
</comment>
<accession>Q18EB8</accession>
<keyword id="KW-0963">Cytoplasm</keyword>
<keyword id="KW-0378">Hydrolase</keyword>
<keyword id="KW-1185">Reference proteome</keyword>
<organism>
    <name type="scientific">Haloquadratum walsbyi (strain DSM 16790 / HBSQ001)</name>
    <dbReference type="NCBI Taxonomy" id="362976"/>
    <lineage>
        <taxon>Archaea</taxon>
        <taxon>Methanobacteriati</taxon>
        <taxon>Methanobacteriota</taxon>
        <taxon>Stenosarchaea group</taxon>
        <taxon>Halobacteria</taxon>
        <taxon>Halobacteriales</taxon>
        <taxon>Haloferacaceae</taxon>
        <taxon>Haloquadratum</taxon>
    </lineage>
</organism>
<sequence>MKLSPKDNERLKIFMAAELAKQRKDRGVKLNHPETIAYISNWVCERARDGMDVAEIRQEATSLLTREDVMDGVPEMIDMVQVEPTFSDGTKLVTVHDPIRGDTREQVE</sequence>